<sequence length="105" mass="11069">MDLSSLTGKSAAAGGATSAERKEAIKQQVSSELAMANAQQLITKATEKCYSKCIPAPGASLSGKEQTCLTRCMERYFEAFNIVSSTYVRRVSNERAAGAVAEAGL</sequence>
<feature type="chain" id="PRO_0000228079" description="Mitochondrial import inner membrane translocase subunit TIM13">
    <location>
        <begin position="1"/>
        <end position="105"/>
    </location>
</feature>
<feature type="region of interest" description="Disordered" evidence="2">
    <location>
        <begin position="1"/>
        <end position="23"/>
    </location>
</feature>
<feature type="short sequence motif" description="Twin CX3C motif">
    <location>
        <begin position="49"/>
        <end position="72"/>
    </location>
</feature>
<feature type="compositionally biased region" description="Low complexity" evidence="2">
    <location>
        <begin position="1"/>
        <end position="18"/>
    </location>
</feature>
<feature type="disulfide bond" evidence="1">
    <location>
        <begin position="49"/>
        <end position="72"/>
    </location>
</feature>
<feature type="disulfide bond" evidence="1">
    <location>
        <begin position="53"/>
        <end position="68"/>
    </location>
</feature>
<proteinExistence type="inferred from homology"/>
<organism>
    <name type="scientific">Mycosarcoma maydis</name>
    <name type="common">Corn smut fungus</name>
    <name type="synonym">Ustilago maydis</name>
    <dbReference type="NCBI Taxonomy" id="5270"/>
    <lineage>
        <taxon>Eukaryota</taxon>
        <taxon>Fungi</taxon>
        <taxon>Dikarya</taxon>
        <taxon>Basidiomycota</taxon>
        <taxon>Ustilaginomycotina</taxon>
        <taxon>Ustilaginomycetes</taxon>
        <taxon>Ustilaginales</taxon>
        <taxon>Ustilaginaceae</taxon>
        <taxon>Mycosarcoma</taxon>
    </lineage>
</organism>
<protein>
    <recommendedName>
        <fullName>Mitochondrial import inner membrane translocase subunit TIM13</fullName>
    </recommendedName>
</protein>
<gene>
    <name type="primary">TIM13</name>
    <name type="ORF">UMAG_11616</name>
</gene>
<accession>Q4PGT2</accession>
<accession>A0A0D1CH27</accession>
<name>TIM13_MYCMD</name>
<evidence type="ECO:0000250" key="1"/>
<evidence type="ECO:0000256" key="2">
    <source>
        <dbReference type="SAM" id="MobiDB-lite"/>
    </source>
</evidence>
<evidence type="ECO:0000305" key="3"/>
<keyword id="KW-0143">Chaperone</keyword>
<keyword id="KW-1015">Disulfide bond</keyword>
<keyword id="KW-0472">Membrane</keyword>
<keyword id="KW-0479">Metal-binding</keyword>
<keyword id="KW-0496">Mitochondrion</keyword>
<keyword id="KW-0999">Mitochondrion inner membrane</keyword>
<keyword id="KW-0653">Protein transport</keyword>
<keyword id="KW-1185">Reference proteome</keyword>
<keyword id="KW-0811">Translocation</keyword>
<keyword id="KW-0813">Transport</keyword>
<keyword id="KW-0862">Zinc</keyword>
<dbReference type="EMBL" id="CM003140">
    <property type="protein sequence ID" value="KIS72272.1"/>
    <property type="molecule type" value="Genomic_DNA"/>
</dbReference>
<dbReference type="RefSeq" id="XP_011386792.1">
    <property type="nucleotide sequence ID" value="XM_011388490.1"/>
</dbReference>
<dbReference type="SMR" id="Q4PGT2"/>
<dbReference type="FunCoup" id="Q4PGT2">
    <property type="interactions" value="257"/>
</dbReference>
<dbReference type="STRING" id="237631.Q4PGT2"/>
<dbReference type="EnsemblFungi" id="KIS72272">
    <property type="protein sequence ID" value="KIS72272"/>
    <property type="gene ID" value="UMAG_11616"/>
</dbReference>
<dbReference type="GeneID" id="23567478"/>
<dbReference type="KEGG" id="uma:UMAG_11616"/>
<dbReference type="VEuPathDB" id="FungiDB:UMAG_11616"/>
<dbReference type="eggNOG" id="KOG1733">
    <property type="taxonomic scope" value="Eukaryota"/>
</dbReference>
<dbReference type="HOGENOM" id="CLU_141397_0_1_1"/>
<dbReference type="InParanoid" id="Q4PGT2"/>
<dbReference type="OrthoDB" id="7813104at2759"/>
<dbReference type="Proteomes" id="UP000000561">
    <property type="component" value="Chromosome 1"/>
</dbReference>
<dbReference type="GO" id="GO:0005743">
    <property type="term" value="C:mitochondrial inner membrane"/>
    <property type="evidence" value="ECO:0007669"/>
    <property type="project" value="UniProtKB-SubCell"/>
</dbReference>
<dbReference type="GO" id="GO:0042719">
    <property type="term" value="C:mitochondrial intermembrane space protein transporter complex"/>
    <property type="evidence" value="ECO:0000318"/>
    <property type="project" value="GO_Central"/>
</dbReference>
<dbReference type="GO" id="GO:0046872">
    <property type="term" value="F:metal ion binding"/>
    <property type="evidence" value="ECO:0007669"/>
    <property type="project" value="UniProtKB-KW"/>
</dbReference>
<dbReference type="GO" id="GO:0045039">
    <property type="term" value="P:protein insertion into mitochondrial inner membrane"/>
    <property type="evidence" value="ECO:0000318"/>
    <property type="project" value="GO_Central"/>
</dbReference>
<dbReference type="FunFam" id="1.10.287.810:FF:000001">
    <property type="entry name" value="mitochondrial import inner membrane translocase subunit TIM13"/>
    <property type="match status" value="1"/>
</dbReference>
<dbReference type="Gene3D" id="1.10.287.810">
    <property type="entry name" value="Mitochondrial import inner membrane translocase subunit tim13 like domains"/>
    <property type="match status" value="1"/>
</dbReference>
<dbReference type="InterPro" id="IPR004217">
    <property type="entry name" value="Tim10-like"/>
</dbReference>
<dbReference type="InterPro" id="IPR035427">
    <property type="entry name" value="Tim10-like_dom_sf"/>
</dbReference>
<dbReference type="Pfam" id="PF02953">
    <property type="entry name" value="zf-Tim10_DDP"/>
    <property type="match status" value="1"/>
</dbReference>
<dbReference type="SUPFAM" id="SSF144122">
    <property type="entry name" value="Tim10-like"/>
    <property type="match status" value="1"/>
</dbReference>
<reference key="1">
    <citation type="journal article" date="2006" name="Nature">
        <title>Insights from the genome of the biotrophic fungal plant pathogen Ustilago maydis.</title>
        <authorList>
            <person name="Kaemper J."/>
            <person name="Kahmann R."/>
            <person name="Boelker M."/>
            <person name="Ma L.-J."/>
            <person name="Brefort T."/>
            <person name="Saville B.J."/>
            <person name="Banuett F."/>
            <person name="Kronstad J.W."/>
            <person name="Gold S.E."/>
            <person name="Mueller O."/>
            <person name="Perlin M.H."/>
            <person name="Woesten H.A.B."/>
            <person name="de Vries R."/>
            <person name="Ruiz-Herrera J."/>
            <person name="Reynaga-Pena C.G."/>
            <person name="Snetselaar K."/>
            <person name="McCann M."/>
            <person name="Perez-Martin J."/>
            <person name="Feldbruegge M."/>
            <person name="Basse C.W."/>
            <person name="Steinberg G."/>
            <person name="Ibeas J.I."/>
            <person name="Holloman W."/>
            <person name="Guzman P."/>
            <person name="Farman M.L."/>
            <person name="Stajich J.E."/>
            <person name="Sentandreu R."/>
            <person name="Gonzalez-Prieto J.M."/>
            <person name="Kennell J.C."/>
            <person name="Molina L."/>
            <person name="Schirawski J."/>
            <person name="Mendoza-Mendoza A."/>
            <person name="Greilinger D."/>
            <person name="Muench K."/>
            <person name="Roessel N."/>
            <person name="Scherer M."/>
            <person name="Vranes M."/>
            <person name="Ladendorf O."/>
            <person name="Vincon V."/>
            <person name="Fuchs U."/>
            <person name="Sandrock B."/>
            <person name="Meng S."/>
            <person name="Ho E.C.H."/>
            <person name="Cahill M.J."/>
            <person name="Boyce K.J."/>
            <person name="Klose J."/>
            <person name="Klosterman S.J."/>
            <person name="Deelstra H.J."/>
            <person name="Ortiz-Castellanos L."/>
            <person name="Li W."/>
            <person name="Sanchez-Alonso P."/>
            <person name="Schreier P.H."/>
            <person name="Haeuser-Hahn I."/>
            <person name="Vaupel M."/>
            <person name="Koopmann E."/>
            <person name="Friedrich G."/>
            <person name="Voss H."/>
            <person name="Schlueter T."/>
            <person name="Margolis J."/>
            <person name="Platt D."/>
            <person name="Swimmer C."/>
            <person name="Gnirke A."/>
            <person name="Chen F."/>
            <person name="Vysotskaia V."/>
            <person name="Mannhaupt G."/>
            <person name="Gueldener U."/>
            <person name="Muensterkoetter M."/>
            <person name="Haase D."/>
            <person name="Oesterheld M."/>
            <person name="Mewes H.-W."/>
            <person name="Mauceli E.W."/>
            <person name="DeCaprio D."/>
            <person name="Wade C.M."/>
            <person name="Butler J."/>
            <person name="Young S.K."/>
            <person name="Jaffe D.B."/>
            <person name="Calvo S.E."/>
            <person name="Nusbaum C."/>
            <person name="Galagan J.E."/>
            <person name="Birren B.W."/>
        </authorList>
    </citation>
    <scope>NUCLEOTIDE SEQUENCE [LARGE SCALE GENOMIC DNA]</scope>
    <source>
        <strain>DSM 14603 / FGSC 9021 / UM521</strain>
    </source>
</reference>
<reference key="2">
    <citation type="submission" date="2014-09" db="EMBL/GenBank/DDBJ databases">
        <authorList>
            <person name="Gueldener U."/>
            <person name="Muensterkoetter M."/>
            <person name="Walter M.C."/>
            <person name="Mannhaupt G."/>
            <person name="Kahmann R."/>
        </authorList>
    </citation>
    <scope>GENOME REANNOTATION</scope>
    <source>
        <strain>DSM 14603 / FGSC 9021 / UM521</strain>
    </source>
</reference>
<comment type="function">
    <text evidence="1">Mitochondrial intermembrane chaperone that participates in the import and insertion of some multi-pass transmembrane proteins into the mitochondrial inner membrane. Also required for the transfer of beta-barrel precursors from the TOM complex to the sorting and assembly machinery (SAM complex) of the outer membrane. Acts as a chaperone-like protein that protects the hydrophobic precursors from aggregation and guide them through the mitochondrial intermembrane space. The TIM8-TIM13 complex is non essential and only mediates the import of few proteins, while the predominant TIM9-TIM10 70 kDa complex is crucial and mediates the import of much more proteins (By similarity).</text>
</comment>
<comment type="subunit">
    <text evidence="1">Heterohexamer; composed of 3 copies of TIM8 and 3 copies of TIM13, named soluble 70 kDa complex. Associates with the TIM22 complex, whose core is composed of TIM22 and TIM54. Interacts with the transmembrane regions of multi-pass transmembrane proteins in transit (By similarity).</text>
</comment>
<comment type="subcellular location">
    <subcellularLocation>
        <location evidence="1">Mitochondrion inner membrane</location>
        <topology evidence="1">Peripheral membrane protein</topology>
        <orientation evidence="1">Intermembrane side</orientation>
    </subcellularLocation>
</comment>
<comment type="domain">
    <text evidence="1">The twin CX3C motif contains 4 conserved Cys residues that form 2 disulfide bonds in the mitochondrial intermembrane space. However, during the transit of TIM13 from cytoplasm into mitochondrion, the Cys residues probably coordinate zinc, thereby preventing folding and allowing its transfer across mitochondrial outer membrane (By similarity).</text>
</comment>
<comment type="similarity">
    <text evidence="3">Belongs to the small Tim family.</text>
</comment>